<sequence>MAKRSIKSETSPELQLGRPVTAPDSPETARLDRVPNPQKDTDYLARFTVPEFTSLCPVTGQPDFAHLVIDYAPGPWLVESKSLKLYLASFRNHGAFHEDCTVAIGKRLATELKPKWLRIGGYWYPRGGIPIDVFWQTGKLPKGLWVPDQGVAPYRGRG</sequence>
<protein>
    <recommendedName>
        <fullName evidence="1">NADPH-dependent 7-cyano-7-deazaguanine reductase</fullName>
        <ecNumber evidence="1">1.7.1.13</ecNumber>
    </recommendedName>
    <alternativeName>
        <fullName evidence="1">7-cyano-7-carbaguanine reductase</fullName>
    </alternativeName>
    <alternativeName>
        <fullName evidence="1">NADPH-dependent nitrile oxidoreductase</fullName>
    </alternativeName>
    <alternativeName>
        <fullName evidence="1">PreQ(0) reductase</fullName>
    </alternativeName>
</protein>
<dbReference type="EC" id="1.7.1.13" evidence="1"/>
<dbReference type="EMBL" id="CP000494">
    <property type="protein sequence ID" value="ABQ36508.1"/>
    <property type="molecule type" value="Genomic_DNA"/>
</dbReference>
<dbReference type="RefSeq" id="WP_012044504.1">
    <property type="nucleotide sequence ID" value="NC_009485.1"/>
</dbReference>
<dbReference type="SMR" id="A5EK14"/>
<dbReference type="STRING" id="288000.BBta_4472"/>
<dbReference type="KEGG" id="bbt:BBta_4472"/>
<dbReference type="eggNOG" id="COG0780">
    <property type="taxonomic scope" value="Bacteria"/>
</dbReference>
<dbReference type="HOGENOM" id="CLU_102489_0_1_5"/>
<dbReference type="OrthoDB" id="9789995at2"/>
<dbReference type="UniPathway" id="UPA00392"/>
<dbReference type="Proteomes" id="UP000000246">
    <property type="component" value="Chromosome"/>
</dbReference>
<dbReference type="GO" id="GO:0005737">
    <property type="term" value="C:cytoplasm"/>
    <property type="evidence" value="ECO:0007669"/>
    <property type="project" value="UniProtKB-SubCell"/>
</dbReference>
<dbReference type="GO" id="GO:0033739">
    <property type="term" value="F:preQ1 synthase activity"/>
    <property type="evidence" value="ECO:0007669"/>
    <property type="project" value="UniProtKB-UniRule"/>
</dbReference>
<dbReference type="GO" id="GO:0008616">
    <property type="term" value="P:queuosine biosynthetic process"/>
    <property type="evidence" value="ECO:0007669"/>
    <property type="project" value="UniProtKB-UniRule"/>
</dbReference>
<dbReference type="GO" id="GO:0006400">
    <property type="term" value="P:tRNA modification"/>
    <property type="evidence" value="ECO:0007669"/>
    <property type="project" value="UniProtKB-UniRule"/>
</dbReference>
<dbReference type="Gene3D" id="3.30.1130.10">
    <property type="match status" value="1"/>
</dbReference>
<dbReference type="HAMAP" id="MF_00818">
    <property type="entry name" value="QueF_type1"/>
    <property type="match status" value="1"/>
</dbReference>
<dbReference type="InterPro" id="IPR043133">
    <property type="entry name" value="GTP-CH-I_C/QueF"/>
</dbReference>
<dbReference type="InterPro" id="IPR050084">
    <property type="entry name" value="NADPH_dep_7-cyano-7-deazaG_red"/>
</dbReference>
<dbReference type="InterPro" id="IPR029500">
    <property type="entry name" value="QueF"/>
</dbReference>
<dbReference type="InterPro" id="IPR016856">
    <property type="entry name" value="QueF_type1"/>
</dbReference>
<dbReference type="NCBIfam" id="TIGR03139">
    <property type="entry name" value="QueF-II"/>
    <property type="match status" value="1"/>
</dbReference>
<dbReference type="PANTHER" id="PTHR34354">
    <property type="entry name" value="NADPH-DEPENDENT 7-CYANO-7-DEAZAGUANINE REDUCTASE"/>
    <property type="match status" value="1"/>
</dbReference>
<dbReference type="PANTHER" id="PTHR34354:SF1">
    <property type="entry name" value="NADPH-DEPENDENT 7-CYANO-7-DEAZAGUANINE REDUCTASE"/>
    <property type="match status" value="1"/>
</dbReference>
<dbReference type="Pfam" id="PF14489">
    <property type="entry name" value="QueF"/>
    <property type="match status" value="1"/>
</dbReference>
<dbReference type="SUPFAM" id="SSF55620">
    <property type="entry name" value="Tetrahydrobiopterin biosynthesis enzymes-like"/>
    <property type="match status" value="1"/>
</dbReference>
<keyword id="KW-0963">Cytoplasm</keyword>
<keyword id="KW-0521">NADP</keyword>
<keyword id="KW-0560">Oxidoreductase</keyword>
<keyword id="KW-0671">Queuosine biosynthesis</keyword>
<keyword id="KW-1185">Reference proteome</keyword>
<organism>
    <name type="scientific">Bradyrhizobium sp. (strain BTAi1 / ATCC BAA-1182)</name>
    <dbReference type="NCBI Taxonomy" id="288000"/>
    <lineage>
        <taxon>Bacteria</taxon>
        <taxon>Pseudomonadati</taxon>
        <taxon>Pseudomonadota</taxon>
        <taxon>Alphaproteobacteria</taxon>
        <taxon>Hyphomicrobiales</taxon>
        <taxon>Nitrobacteraceae</taxon>
        <taxon>Bradyrhizobium</taxon>
    </lineage>
</organism>
<reference key="1">
    <citation type="journal article" date="2007" name="Science">
        <title>Legumes symbioses: absence of nod genes in photosynthetic bradyrhizobia.</title>
        <authorList>
            <person name="Giraud E."/>
            <person name="Moulin L."/>
            <person name="Vallenet D."/>
            <person name="Barbe V."/>
            <person name="Cytryn E."/>
            <person name="Avarre J.-C."/>
            <person name="Jaubert M."/>
            <person name="Simon D."/>
            <person name="Cartieaux F."/>
            <person name="Prin Y."/>
            <person name="Bena G."/>
            <person name="Hannibal L."/>
            <person name="Fardoux J."/>
            <person name="Kojadinovic M."/>
            <person name="Vuillet L."/>
            <person name="Lajus A."/>
            <person name="Cruveiller S."/>
            <person name="Rouy Z."/>
            <person name="Mangenot S."/>
            <person name="Segurens B."/>
            <person name="Dossat C."/>
            <person name="Franck W.L."/>
            <person name="Chang W.-S."/>
            <person name="Saunders E."/>
            <person name="Bruce D."/>
            <person name="Richardson P."/>
            <person name="Normand P."/>
            <person name="Dreyfus B."/>
            <person name="Pignol D."/>
            <person name="Stacey G."/>
            <person name="Emerich D."/>
            <person name="Vermeglio A."/>
            <person name="Medigue C."/>
            <person name="Sadowsky M."/>
        </authorList>
    </citation>
    <scope>NUCLEOTIDE SEQUENCE [LARGE SCALE GENOMIC DNA]</scope>
    <source>
        <strain>BTAi1 / ATCC BAA-1182</strain>
    </source>
</reference>
<gene>
    <name evidence="1" type="primary">queF</name>
    <name type="ordered locus">BBta_4472</name>
</gene>
<comment type="function">
    <text evidence="1">Catalyzes the NADPH-dependent reduction of 7-cyano-7-deazaguanine (preQ0) to 7-aminomethyl-7-deazaguanine (preQ1).</text>
</comment>
<comment type="catalytic activity">
    <reaction evidence="1">
        <text>7-aminomethyl-7-carbaguanine + 2 NADP(+) = 7-cyano-7-deazaguanine + 2 NADPH + 3 H(+)</text>
        <dbReference type="Rhea" id="RHEA:13409"/>
        <dbReference type="ChEBI" id="CHEBI:15378"/>
        <dbReference type="ChEBI" id="CHEBI:45075"/>
        <dbReference type="ChEBI" id="CHEBI:57783"/>
        <dbReference type="ChEBI" id="CHEBI:58349"/>
        <dbReference type="ChEBI" id="CHEBI:58703"/>
        <dbReference type="EC" id="1.7.1.13"/>
    </reaction>
</comment>
<comment type="pathway">
    <text evidence="1">tRNA modification; tRNA-queuosine biosynthesis.</text>
</comment>
<comment type="subcellular location">
    <subcellularLocation>
        <location evidence="1">Cytoplasm</location>
    </subcellularLocation>
</comment>
<comment type="similarity">
    <text evidence="1">Belongs to the GTP cyclohydrolase I family. QueF type 1 subfamily.</text>
</comment>
<name>QUEF_BRASB</name>
<accession>A5EK14</accession>
<feature type="chain" id="PRO_1000062377" description="NADPH-dependent 7-cyano-7-deazaguanine reductase">
    <location>
        <begin position="1"/>
        <end position="158"/>
    </location>
</feature>
<feature type="region of interest" description="Disordered" evidence="2">
    <location>
        <begin position="1"/>
        <end position="37"/>
    </location>
</feature>
<feature type="compositionally biased region" description="Basic and acidic residues" evidence="2">
    <location>
        <begin position="27"/>
        <end position="37"/>
    </location>
</feature>
<feature type="active site" description="Thioimide intermediate" evidence="1">
    <location>
        <position position="56"/>
    </location>
</feature>
<feature type="active site" description="Proton donor" evidence="1">
    <location>
        <position position="63"/>
    </location>
</feature>
<feature type="binding site" evidence="1">
    <location>
        <begin position="78"/>
        <end position="80"/>
    </location>
    <ligand>
        <name>substrate</name>
    </ligand>
</feature>
<feature type="binding site" evidence="1">
    <location>
        <begin position="97"/>
        <end position="98"/>
    </location>
    <ligand>
        <name>substrate</name>
    </ligand>
</feature>
<proteinExistence type="inferred from homology"/>
<evidence type="ECO:0000255" key="1">
    <source>
        <dbReference type="HAMAP-Rule" id="MF_00818"/>
    </source>
</evidence>
<evidence type="ECO:0000256" key="2">
    <source>
        <dbReference type="SAM" id="MobiDB-lite"/>
    </source>
</evidence>